<protein>
    <recommendedName>
        <fullName>LEM domain-containing protein 1</fullName>
    </recommendedName>
</protein>
<keyword id="KW-1185">Reference proteome</keyword>
<organism>
    <name type="scientific">Mus musculus</name>
    <name type="common">Mouse</name>
    <dbReference type="NCBI Taxonomy" id="10090"/>
    <lineage>
        <taxon>Eukaryota</taxon>
        <taxon>Metazoa</taxon>
        <taxon>Chordata</taxon>
        <taxon>Craniata</taxon>
        <taxon>Vertebrata</taxon>
        <taxon>Euteleostomi</taxon>
        <taxon>Mammalia</taxon>
        <taxon>Eutheria</taxon>
        <taxon>Euarchontoglires</taxon>
        <taxon>Glires</taxon>
        <taxon>Rodentia</taxon>
        <taxon>Myomorpha</taxon>
        <taxon>Muroidea</taxon>
        <taxon>Muridae</taxon>
        <taxon>Murinae</taxon>
        <taxon>Mus</taxon>
        <taxon>Mus</taxon>
    </lineage>
</organism>
<name>LEMD1_MOUSE</name>
<evidence type="ECO:0000255" key="1">
    <source>
        <dbReference type="PROSITE-ProRule" id="PRU00313"/>
    </source>
</evidence>
<evidence type="ECO:0000256" key="2">
    <source>
        <dbReference type="SAM" id="MobiDB-lite"/>
    </source>
</evidence>
<reference key="1">
    <citation type="journal article" date="2004" name="Genome Res.">
        <title>The status, quality, and expansion of the NIH full-length cDNA project: the Mammalian Gene Collection (MGC).</title>
        <authorList>
            <consortium name="The MGC Project Team"/>
        </authorList>
    </citation>
    <scope>NUCLEOTIDE SEQUENCE [LARGE SCALE MRNA]</scope>
</reference>
<gene>
    <name type="primary">Lemd1</name>
</gene>
<dbReference type="EMBL" id="BC115462">
    <property type="protein sequence ID" value="AAI15463.1"/>
    <property type="molecule type" value="mRNA"/>
</dbReference>
<dbReference type="EMBL" id="BC115463">
    <property type="protein sequence ID" value="AAI15464.1"/>
    <property type="molecule type" value="mRNA"/>
</dbReference>
<dbReference type="CCDS" id="CCDS35705.1"/>
<dbReference type="RefSeq" id="NP_001028422.2">
    <property type="nucleotide sequence ID" value="NM_001033250.4"/>
</dbReference>
<dbReference type="RefSeq" id="XP_006529414.1">
    <property type="nucleotide sequence ID" value="XM_006529351.4"/>
</dbReference>
<dbReference type="SMR" id="Q14C37"/>
<dbReference type="STRING" id="10090.ENSMUSP00000140193"/>
<dbReference type="PhosphoSitePlus" id="Q14C37"/>
<dbReference type="PaxDb" id="10090-ENSMUSP00000107976"/>
<dbReference type="ProteomicsDB" id="264937"/>
<dbReference type="Antibodypedia" id="51435">
    <property type="antibodies" value="30 antibodies from 16 providers"/>
</dbReference>
<dbReference type="Ensembl" id="ENSMUST00000112357.9">
    <property type="protein sequence ID" value="ENSMUSP00000107976.3"/>
    <property type="gene ID" value="ENSMUSG00000079330.11"/>
</dbReference>
<dbReference type="GeneID" id="213409"/>
<dbReference type="KEGG" id="mmu:213409"/>
<dbReference type="UCSC" id="uc007coj.2">
    <property type="organism name" value="mouse"/>
</dbReference>
<dbReference type="AGR" id="MGI:1922403"/>
<dbReference type="CTD" id="93273"/>
<dbReference type="MGI" id="MGI:1922403">
    <property type="gene designation" value="Lemd1"/>
</dbReference>
<dbReference type="VEuPathDB" id="HostDB:ENSMUSG00000079330"/>
<dbReference type="eggNOG" id="ENOG502QWCI">
    <property type="taxonomic scope" value="Eukaryota"/>
</dbReference>
<dbReference type="GeneTree" id="ENSGT00940000154098"/>
<dbReference type="HOGENOM" id="CLU_160101_0_0_1"/>
<dbReference type="InParanoid" id="Q14C37"/>
<dbReference type="OrthoDB" id="6363067at2759"/>
<dbReference type="PhylomeDB" id="Q14C37"/>
<dbReference type="TreeFam" id="TF340652"/>
<dbReference type="BioGRID-ORCS" id="213409">
    <property type="hits" value="3 hits in 77 CRISPR screens"/>
</dbReference>
<dbReference type="ChiTaRS" id="Lemd1">
    <property type="organism name" value="mouse"/>
</dbReference>
<dbReference type="PRO" id="PR:Q14C37"/>
<dbReference type="Proteomes" id="UP000000589">
    <property type="component" value="Chromosome 1"/>
</dbReference>
<dbReference type="RNAct" id="Q14C37">
    <property type="molecule type" value="protein"/>
</dbReference>
<dbReference type="Bgee" id="ENSMUSG00000079330">
    <property type="expression patterns" value="Expressed in otolith organ and 82 other cell types or tissues"/>
</dbReference>
<dbReference type="ExpressionAtlas" id="Q14C37">
    <property type="expression patterns" value="baseline and differential"/>
</dbReference>
<dbReference type="CDD" id="cd12940">
    <property type="entry name" value="LEM_LAP2_LEMD1"/>
    <property type="match status" value="1"/>
</dbReference>
<dbReference type="FunFam" id="1.10.720.40:FF:000001">
    <property type="entry name" value="LEM domain containing 2, isoform CRA_a"/>
    <property type="match status" value="1"/>
</dbReference>
<dbReference type="Gene3D" id="1.10.720.40">
    <property type="match status" value="1"/>
</dbReference>
<dbReference type="InterPro" id="IPR011015">
    <property type="entry name" value="LEM/LEM-like_dom_sf"/>
</dbReference>
<dbReference type="InterPro" id="IPR003887">
    <property type="entry name" value="LEM_dom"/>
</dbReference>
<dbReference type="InterPro" id="IPR051656">
    <property type="entry name" value="LEM_domain"/>
</dbReference>
<dbReference type="PANTHER" id="PTHR12019">
    <property type="entry name" value="LAMINA-ASSOCIATED POLYPEPTIDE THYMOPOIETIN"/>
    <property type="match status" value="1"/>
</dbReference>
<dbReference type="PANTHER" id="PTHR12019:SF12">
    <property type="entry name" value="LEM DOMAIN-CONTAINING PROTEIN 1"/>
    <property type="match status" value="1"/>
</dbReference>
<dbReference type="Pfam" id="PF03020">
    <property type="entry name" value="LEM"/>
    <property type="match status" value="1"/>
</dbReference>
<dbReference type="SMART" id="SM00540">
    <property type="entry name" value="LEM"/>
    <property type="match status" value="1"/>
</dbReference>
<dbReference type="SUPFAM" id="SSF63451">
    <property type="entry name" value="LEM domain"/>
    <property type="match status" value="1"/>
</dbReference>
<dbReference type="PROSITE" id="PS50954">
    <property type="entry name" value="LEM"/>
    <property type="match status" value="1"/>
</dbReference>
<sequence>MVDVKCLSDYELHKHLMKLGFTPGPILPSTRKTYEKKLVQLLASPPWKPPVMKRPTRPHGSEDSDDSEGMLQDQVQGLSGDVSLKKTTLDATRDPRAAPHTRTPGTTFHARTLRTAFCGRAPRTTSHGA</sequence>
<feature type="chain" id="PRO_0000285248" description="LEM domain-containing protein 1">
    <location>
        <begin position="1"/>
        <end position="129"/>
    </location>
</feature>
<feature type="domain" description="LEM" evidence="1">
    <location>
        <begin position="1"/>
        <end position="45"/>
    </location>
</feature>
<feature type="region of interest" description="Disordered" evidence="2">
    <location>
        <begin position="45"/>
        <end position="129"/>
    </location>
</feature>
<feature type="compositionally biased region" description="Basic and acidic residues" evidence="2">
    <location>
        <begin position="83"/>
        <end position="97"/>
    </location>
</feature>
<accession>Q14C37</accession>
<proteinExistence type="evidence at transcript level"/>